<gene>
    <name evidence="1" type="primary">pth</name>
    <name type="ordered locus">Sputcn32_2853</name>
</gene>
<accession>A4Y9D9</accession>
<keyword id="KW-0963">Cytoplasm</keyword>
<keyword id="KW-0378">Hydrolase</keyword>
<keyword id="KW-0694">RNA-binding</keyword>
<keyword id="KW-0820">tRNA-binding</keyword>
<dbReference type="EC" id="3.1.1.29" evidence="1"/>
<dbReference type="EMBL" id="CP000681">
    <property type="protein sequence ID" value="ABP76572.1"/>
    <property type="molecule type" value="Genomic_DNA"/>
</dbReference>
<dbReference type="SMR" id="A4Y9D9"/>
<dbReference type="STRING" id="319224.Sputcn32_2853"/>
<dbReference type="KEGG" id="spc:Sputcn32_2853"/>
<dbReference type="eggNOG" id="COG0193">
    <property type="taxonomic scope" value="Bacteria"/>
</dbReference>
<dbReference type="HOGENOM" id="CLU_062456_3_1_6"/>
<dbReference type="GO" id="GO:0005737">
    <property type="term" value="C:cytoplasm"/>
    <property type="evidence" value="ECO:0007669"/>
    <property type="project" value="UniProtKB-SubCell"/>
</dbReference>
<dbReference type="GO" id="GO:0004045">
    <property type="term" value="F:peptidyl-tRNA hydrolase activity"/>
    <property type="evidence" value="ECO:0007669"/>
    <property type="project" value="UniProtKB-UniRule"/>
</dbReference>
<dbReference type="GO" id="GO:0000049">
    <property type="term" value="F:tRNA binding"/>
    <property type="evidence" value="ECO:0007669"/>
    <property type="project" value="UniProtKB-UniRule"/>
</dbReference>
<dbReference type="GO" id="GO:0006515">
    <property type="term" value="P:protein quality control for misfolded or incompletely synthesized proteins"/>
    <property type="evidence" value="ECO:0007669"/>
    <property type="project" value="UniProtKB-UniRule"/>
</dbReference>
<dbReference type="GO" id="GO:0072344">
    <property type="term" value="P:rescue of stalled ribosome"/>
    <property type="evidence" value="ECO:0007669"/>
    <property type="project" value="UniProtKB-UniRule"/>
</dbReference>
<dbReference type="CDD" id="cd00462">
    <property type="entry name" value="PTH"/>
    <property type="match status" value="1"/>
</dbReference>
<dbReference type="FunFam" id="3.40.50.1470:FF:000001">
    <property type="entry name" value="Peptidyl-tRNA hydrolase"/>
    <property type="match status" value="1"/>
</dbReference>
<dbReference type="Gene3D" id="3.40.50.1470">
    <property type="entry name" value="Peptidyl-tRNA hydrolase"/>
    <property type="match status" value="1"/>
</dbReference>
<dbReference type="HAMAP" id="MF_00083">
    <property type="entry name" value="Pept_tRNA_hydro_bact"/>
    <property type="match status" value="1"/>
</dbReference>
<dbReference type="InterPro" id="IPR001328">
    <property type="entry name" value="Pept_tRNA_hydro"/>
</dbReference>
<dbReference type="InterPro" id="IPR018171">
    <property type="entry name" value="Pept_tRNA_hydro_CS"/>
</dbReference>
<dbReference type="InterPro" id="IPR036416">
    <property type="entry name" value="Pept_tRNA_hydro_sf"/>
</dbReference>
<dbReference type="NCBIfam" id="TIGR00447">
    <property type="entry name" value="pth"/>
    <property type="match status" value="1"/>
</dbReference>
<dbReference type="PANTHER" id="PTHR17224">
    <property type="entry name" value="PEPTIDYL-TRNA HYDROLASE"/>
    <property type="match status" value="1"/>
</dbReference>
<dbReference type="PANTHER" id="PTHR17224:SF1">
    <property type="entry name" value="PEPTIDYL-TRNA HYDROLASE"/>
    <property type="match status" value="1"/>
</dbReference>
<dbReference type="Pfam" id="PF01195">
    <property type="entry name" value="Pept_tRNA_hydro"/>
    <property type="match status" value="1"/>
</dbReference>
<dbReference type="SUPFAM" id="SSF53178">
    <property type="entry name" value="Peptidyl-tRNA hydrolase-like"/>
    <property type="match status" value="1"/>
</dbReference>
<dbReference type="PROSITE" id="PS01196">
    <property type="entry name" value="PEPT_TRNA_HYDROL_2"/>
    <property type="match status" value="1"/>
</dbReference>
<organism>
    <name type="scientific">Shewanella putrefaciens (strain CN-32 / ATCC BAA-453)</name>
    <dbReference type="NCBI Taxonomy" id="319224"/>
    <lineage>
        <taxon>Bacteria</taxon>
        <taxon>Pseudomonadati</taxon>
        <taxon>Pseudomonadota</taxon>
        <taxon>Gammaproteobacteria</taxon>
        <taxon>Alteromonadales</taxon>
        <taxon>Shewanellaceae</taxon>
        <taxon>Shewanella</taxon>
    </lineage>
</organism>
<feature type="chain" id="PRO_1000010650" description="Peptidyl-tRNA hydrolase">
    <location>
        <begin position="1"/>
        <end position="195"/>
    </location>
</feature>
<feature type="active site" description="Proton acceptor" evidence="1">
    <location>
        <position position="22"/>
    </location>
</feature>
<feature type="binding site" evidence="1">
    <location>
        <position position="17"/>
    </location>
    <ligand>
        <name>tRNA</name>
        <dbReference type="ChEBI" id="CHEBI:17843"/>
    </ligand>
</feature>
<feature type="binding site" evidence="1">
    <location>
        <position position="68"/>
    </location>
    <ligand>
        <name>tRNA</name>
        <dbReference type="ChEBI" id="CHEBI:17843"/>
    </ligand>
</feature>
<feature type="binding site" evidence="1">
    <location>
        <position position="70"/>
    </location>
    <ligand>
        <name>tRNA</name>
        <dbReference type="ChEBI" id="CHEBI:17843"/>
    </ligand>
</feature>
<feature type="binding site" evidence="1">
    <location>
        <position position="116"/>
    </location>
    <ligand>
        <name>tRNA</name>
        <dbReference type="ChEBI" id="CHEBI:17843"/>
    </ligand>
</feature>
<feature type="site" description="Discriminates between blocked and unblocked aminoacyl-tRNA" evidence="1">
    <location>
        <position position="12"/>
    </location>
</feature>
<feature type="site" description="Stabilizes the basic form of H active site to accept a proton" evidence="1">
    <location>
        <position position="95"/>
    </location>
</feature>
<reference key="1">
    <citation type="submission" date="2007-04" db="EMBL/GenBank/DDBJ databases">
        <title>Complete sequence of Shewanella putrefaciens CN-32.</title>
        <authorList>
            <consortium name="US DOE Joint Genome Institute"/>
            <person name="Copeland A."/>
            <person name="Lucas S."/>
            <person name="Lapidus A."/>
            <person name="Barry K."/>
            <person name="Detter J.C."/>
            <person name="Glavina del Rio T."/>
            <person name="Hammon N."/>
            <person name="Israni S."/>
            <person name="Dalin E."/>
            <person name="Tice H."/>
            <person name="Pitluck S."/>
            <person name="Chain P."/>
            <person name="Malfatti S."/>
            <person name="Shin M."/>
            <person name="Vergez L."/>
            <person name="Schmutz J."/>
            <person name="Larimer F."/>
            <person name="Land M."/>
            <person name="Hauser L."/>
            <person name="Kyrpides N."/>
            <person name="Mikhailova N."/>
            <person name="Romine M.F."/>
            <person name="Fredrickson J."/>
            <person name="Tiedje J."/>
            <person name="Richardson P."/>
        </authorList>
    </citation>
    <scope>NUCLEOTIDE SEQUENCE [LARGE SCALE GENOMIC DNA]</scope>
    <source>
        <strain>CN-32 / ATCC BAA-453</strain>
    </source>
</reference>
<protein>
    <recommendedName>
        <fullName evidence="1">Peptidyl-tRNA hydrolase</fullName>
        <shortName evidence="1">Pth</shortName>
        <ecNumber evidence="1">3.1.1.29</ecNumber>
    </recommendedName>
</protein>
<evidence type="ECO:0000255" key="1">
    <source>
        <dbReference type="HAMAP-Rule" id="MF_00083"/>
    </source>
</evidence>
<proteinExistence type="inferred from homology"/>
<name>PTH_SHEPC</name>
<sequence length="195" mass="21243">MSEIKLIVGLANPGAEYAQTRHNAGAWYVQELARICGVTLVPDSKYFGLTARAVLQGKDVRLLIPTTYMNLSGKAVGALANFFRITPEEILVAHDELDMPPGVAKFKLGGGHGGHNGLKDIIAKLANDKNFYRLRIGIGHPGDKNQVSGYVLGKAPAKEQELIEAAIDEAVRSTEILYKENMVKAMTRLHSFKAE</sequence>
<comment type="function">
    <text evidence="1">Hydrolyzes ribosome-free peptidyl-tRNAs (with 1 or more amino acids incorporated), which drop off the ribosome during protein synthesis, or as a result of ribosome stalling.</text>
</comment>
<comment type="function">
    <text evidence="1">Catalyzes the release of premature peptidyl moieties from peptidyl-tRNA molecules trapped in stalled 50S ribosomal subunits, and thus maintains levels of free tRNAs and 50S ribosomes.</text>
</comment>
<comment type="catalytic activity">
    <reaction evidence="1">
        <text>an N-acyl-L-alpha-aminoacyl-tRNA + H2O = an N-acyl-L-amino acid + a tRNA + H(+)</text>
        <dbReference type="Rhea" id="RHEA:54448"/>
        <dbReference type="Rhea" id="RHEA-COMP:10123"/>
        <dbReference type="Rhea" id="RHEA-COMP:13883"/>
        <dbReference type="ChEBI" id="CHEBI:15377"/>
        <dbReference type="ChEBI" id="CHEBI:15378"/>
        <dbReference type="ChEBI" id="CHEBI:59874"/>
        <dbReference type="ChEBI" id="CHEBI:78442"/>
        <dbReference type="ChEBI" id="CHEBI:138191"/>
        <dbReference type="EC" id="3.1.1.29"/>
    </reaction>
</comment>
<comment type="subunit">
    <text evidence="1">Monomer.</text>
</comment>
<comment type="subcellular location">
    <subcellularLocation>
        <location evidence="1">Cytoplasm</location>
    </subcellularLocation>
</comment>
<comment type="similarity">
    <text evidence="1">Belongs to the PTH family.</text>
</comment>